<name>LPTE_ECOBW</name>
<feature type="signal peptide" evidence="1">
    <location>
        <begin position="1"/>
        <end position="18"/>
    </location>
</feature>
<feature type="chain" id="PRO_1000213778" description="LPS-assembly lipoprotein LptE">
    <location>
        <begin position="19"/>
        <end position="193"/>
    </location>
</feature>
<feature type="region of interest" description="Disordered" evidence="2">
    <location>
        <begin position="166"/>
        <end position="193"/>
    </location>
</feature>
<feature type="compositionally biased region" description="Low complexity" evidence="2">
    <location>
        <begin position="174"/>
        <end position="186"/>
    </location>
</feature>
<feature type="lipid moiety-binding region" description="N-palmitoyl cysteine" evidence="1">
    <location>
        <position position="19"/>
    </location>
</feature>
<feature type="lipid moiety-binding region" description="S-diacylglycerol cysteine" evidence="1">
    <location>
        <position position="19"/>
    </location>
</feature>
<evidence type="ECO:0000255" key="1">
    <source>
        <dbReference type="HAMAP-Rule" id="MF_01186"/>
    </source>
</evidence>
<evidence type="ECO:0000256" key="2">
    <source>
        <dbReference type="SAM" id="MobiDB-lite"/>
    </source>
</evidence>
<proteinExistence type="inferred from homology"/>
<comment type="function">
    <text evidence="1">Together with LptD, is involved in the assembly of lipopolysaccharide (LPS) at the surface of the outer membrane. Required for the proper assembly of LptD. Binds LPS and may serve as the LPS recognition site at the outer membrane.</text>
</comment>
<comment type="subunit">
    <text evidence="1">Component of the lipopolysaccharide transport and assembly complex. Interacts with LptD.</text>
</comment>
<comment type="subcellular location">
    <subcellularLocation>
        <location evidence="1">Cell outer membrane</location>
        <topology evidence="1">Lipid-anchor</topology>
    </subcellularLocation>
</comment>
<comment type="similarity">
    <text evidence="1">Belongs to the LptE lipoprotein family.</text>
</comment>
<gene>
    <name evidence="1" type="primary">lptE</name>
    <name type="synonym">rlpB</name>
    <name type="ordered locus">BWG_0512</name>
</gene>
<dbReference type="EMBL" id="CP001396">
    <property type="protein sequence ID" value="ACR63777.1"/>
    <property type="molecule type" value="Genomic_DNA"/>
</dbReference>
<dbReference type="RefSeq" id="WP_001269673.1">
    <property type="nucleotide sequence ID" value="NC_012759.1"/>
</dbReference>
<dbReference type="SMR" id="C4ZWC8"/>
<dbReference type="GeneID" id="93776841"/>
<dbReference type="KEGG" id="ebw:BWG_0512"/>
<dbReference type="HOGENOM" id="CLU_103309_1_1_6"/>
<dbReference type="GO" id="GO:0009279">
    <property type="term" value="C:cell outer membrane"/>
    <property type="evidence" value="ECO:0007669"/>
    <property type="project" value="UniProtKB-SubCell"/>
</dbReference>
<dbReference type="GO" id="GO:1990351">
    <property type="term" value="C:transporter complex"/>
    <property type="evidence" value="ECO:0007669"/>
    <property type="project" value="TreeGrafter"/>
</dbReference>
<dbReference type="GO" id="GO:0001530">
    <property type="term" value="F:lipopolysaccharide binding"/>
    <property type="evidence" value="ECO:0007669"/>
    <property type="project" value="TreeGrafter"/>
</dbReference>
<dbReference type="GO" id="GO:0043165">
    <property type="term" value="P:Gram-negative-bacterium-type cell outer membrane assembly"/>
    <property type="evidence" value="ECO:0007669"/>
    <property type="project" value="UniProtKB-UniRule"/>
</dbReference>
<dbReference type="GO" id="GO:0015920">
    <property type="term" value="P:lipopolysaccharide transport"/>
    <property type="evidence" value="ECO:0007669"/>
    <property type="project" value="TreeGrafter"/>
</dbReference>
<dbReference type="FunFam" id="3.30.160.150:FF:000001">
    <property type="entry name" value="LPS-assembly lipoprotein LptE"/>
    <property type="match status" value="1"/>
</dbReference>
<dbReference type="Gene3D" id="3.30.160.150">
    <property type="entry name" value="Lipoprotein like domain"/>
    <property type="match status" value="1"/>
</dbReference>
<dbReference type="HAMAP" id="MF_01186">
    <property type="entry name" value="LPS_assembly_LptE"/>
    <property type="match status" value="1"/>
</dbReference>
<dbReference type="InterPro" id="IPR007485">
    <property type="entry name" value="LPS_assembly_LptE"/>
</dbReference>
<dbReference type="NCBIfam" id="NF008062">
    <property type="entry name" value="PRK10796.1"/>
    <property type="match status" value="1"/>
</dbReference>
<dbReference type="PANTHER" id="PTHR38098">
    <property type="entry name" value="LPS-ASSEMBLY LIPOPROTEIN LPTE"/>
    <property type="match status" value="1"/>
</dbReference>
<dbReference type="PANTHER" id="PTHR38098:SF1">
    <property type="entry name" value="LPS-ASSEMBLY LIPOPROTEIN LPTE"/>
    <property type="match status" value="1"/>
</dbReference>
<dbReference type="Pfam" id="PF04390">
    <property type="entry name" value="LptE"/>
    <property type="match status" value="1"/>
</dbReference>
<dbReference type="PROSITE" id="PS51257">
    <property type="entry name" value="PROKAR_LIPOPROTEIN"/>
    <property type="match status" value="1"/>
</dbReference>
<keyword id="KW-0998">Cell outer membrane</keyword>
<keyword id="KW-0449">Lipoprotein</keyword>
<keyword id="KW-0472">Membrane</keyword>
<keyword id="KW-0564">Palmitate</keyword>
<keyword id="KW-0732">Signal</keyword>
<reference key="1">
    <citation type="journal article" date="2009" name="J. Bacteriol.">
        <title>Genomic sequencing reveals regulatory mutations and recombinational events in the widely used MC4100 lineage of Escherichia coli K-12.</title>
        <authorList>
            <person name="Ferenci T."/>
            <person name="Zhou Z."/>
            <person name="Betteridge T."/>
            <person name="Ren Y."/>
            <person name="Liu Y."/>
            <person name="Feng L."/>
            <person name="Reeves P.R."/>
            <person name="Wang L."/>
        </authorList>
    </citation>
    <scope>NUCLEOTIDE SEQUENCE [LARGE SCALE GENOMIC DNA]</scope>
    <source>
        <strain>K12 / MC4100 / BW2952</strain>
    </source>
</reference>
<sequence>MRYLATLLLSLAVLITAGCGWHLRDTTQVPSTMKVMILDSGDPNGPLSRAVRNQLRLNGVELLDKETTRKDVPSLRLGKVSIAKDTASVFRNGQTAEYQMIMTVNATVLIPGRDIYPISAKVFRSFFDNPQMALAKDNEQDMIVKEMYDRAAEQLIRKLPSIRAADIRSDEEQTSTTTDTPATPARVSTTLGN</sequence>
<organism>
    <name type="scientific">Escherichia coli (strain K12 / MC4100 / BW2952)</name>
    <dbReference type="NCBI Taxonomy" id="595496"/>
    <lineage>
        <taxon>Bacteria</taxon>
        <taxon>Pseudomonadati</taxon>
        <taxon>Pseudomonadota</taxon>
        <taxon>Gammaproteobacteria</taxon>
        <taxon>Enterobacterales</taxon>
        <taxon>Enterobacteriaceae</taxon>
        <taxon>Escherichia</taxon>
    </lineage>
</organism>
<accession>C4ZWC8</accession>
<protein>
    <recommendedName>
        <fullName evidence="1">LPS-assembly lipoprotein LptE</fullName>
    </recommendedName>
</protein>